<protein>
    <recommendedName>
        <fullName evidence="6">Hybrid PKS-NRPS synthetase TAS1</fullName>
        <ecNumber evidence="5">6.3.2.50</ecNumber>
    </recommendedName>
    <alternativeName>
        <fullName evidence="6">Tenuazonic acid synthetase 1</fullName>
    </alternativeName>
</protein>
<organism>
    <name type="scientific">Cordyceps militaris (strain CM01)</name>
    <name type="common">Caterpillar fungus</name>
    <dbReference type="NCBI Taxonomy" id="983644"/>
    <lineage>
        <taxon>Eukaryota</taxon>
        <taxon>Fungi</taxon>
        <taxon>Dikarya</taxon>
        <taxon>Ascomycota</taxon>
        <taxon>Pezizomycotina</taxon>
        <taxon>Sordariomycetes</taxon>
        <taxon>Hypocreomycetidae</taxon>
        <taxon>Hypocreales</taxon>
        <taxon>Cordycipitaceae</taxon>
        <taxon>Cordyceps</taxon>
    </lineage>
</organism>
<dbReference type="EC" id="6.3.2.50" evidence="5"/>
<dbReference type="EMBL" id="JH126400">
    <property type="protein sequence ID" value="EGX94166.1"/>
    <property type="molecule type" value="Genomic_DNA"/>
</dbReference>
<dbReference type="RefSeq" id="XP_006667652.1">
    <property type="nucleotide sequence ID" value="XM_006667589.1"/>
</dbReference>
<dbReference type="SMR" id="G3J9P0"/>
<dbReference type="STRING" id="983644.G3J9P0"/>
<dbReference type="GeneID" id="18164464"/>
<dbReference type="KEGG" id="cmt:CCM_02437"/>
<dbReference type="VEuPathDB" id="FungiDB:CCM_02437"/>
<dbReference type="eggNOG" id="KOG1178">
    <property type="taxonomic scope" value="Eukaryota"/>
</dbReference>
<dbReference type="eggNOG" id="KOG1202">
    <property type="taxonomic scope" value="Eukaryota"/>
</dbReference>
<dbReference type="HOGENOM" id="CLU_003656_0_0_1"/>
<dbReference type="InParanoid" id="G3J9P0"/>
<dbReference type="OMA" id="DGIGCGN"/>
<dbReference type="OrthoDB" id="5334845at2759"/>
<dbReference type="Proteomes" id="UP000001610">
    <property type="component" value="Unassembled WGS sequence"/>
</dbReference>
<dbReference type="GO" id="GO:0005737">
    <property type="term" value="C:cytoplasm"/>
    <property type="evidence" value="ECO:0007669"/>
    <property type="project" value="TreeGrafter"/>
</dbReference>
<dbReference type="GO" id="GO:0004315">
    <property type="term" value="F:3-oxoacyl-[acyl-carrier-protein] synthase activity"/>
    <property type="evidence" value="ECO:0007669"/>
    <property type="project" value="InterPro"/>
</dbReference>
<dbReference type="GO" id="GO:0016874">
    <property type="term" value="F:ligase activity"/>
    <property type="evidence" value="ECO:0007669"/>
    <property type="project" value="UniProtKB-KW"/>
</dbReference>
<dbReference type="GO" id="GO:0031177">
    <property type="term" value="F:phosphopantetheine binding"/>
    <property type="evidence" value="ECO:0007669"/>
    <property type="project" value="TreeGrafter"/>
</dbReference>
<dbReference type="GO" id="GO:0043041">
    <property type="term" value="P:amino acid activation for nonribosomal peptide biosynthetic process"/>
    <property type="evidence" value="ECO:0007669"/>
    <property type="project" value="TreeGrafter"/>
</dbReference>
<dbReference type="GO" id="GO:0006633">
    <property type="term" value="P:fatty acid biosynthetic process"/>
    <property type="evidence" value="ECO:0007669"/>
    <property type="project" value="InterPro"/>
</dbReference>
<dbReference type="GO" id="GO:0044550">
    <property type="term" value="P:secondary metabolite biosynthetic process"/>
    <property type="evidence" value="ECO:0007669"/>
    <property type="project" value="TreeGrafter"/>
</dbReference>
<dbReference type="CDD" id="cd00833">
    <property type="entry name" value="PKS"/>
    <property type="match status" value="1"/>
</dbReference>
<dbReference type="Gene3D" id="3.30.300.30">
    <property type="match status" value="1"/>
</dbReference>
<dbReference type="Gene3D" id="3.40.47.10">
    <property type="match status" value="1"/>
</dbReference>
<dbReference type="Gene3D" id="1.10.1200.10">
    <property type="entry name" value="ACP-like"/>
    <property type="match status" value="1"/>
</dbReference>
<dbReference type="Gene3D" id="3.30.559.10">
    <property type="entry name" value="Chloramphenicol acetyltransferase-like domain"/>
    <property type="match status" value="1"/>
</dbReference>
<dbReference type="Gene3D" id="3.40.50.12780">
    <property type="entry name" value="N-terminal domain of ligase-like"/>
    <property type="match status" value="1"/>
</dbReference>
<dbReference type="Gene3D" id="3.30.559.30">
    <property type="entry name" value="Nonribosomal peptide synthetase, condensation domain"/>
    <property type="match status" value="1"/>
</dbReference>
<dbReference type="InterPro" id="IPR010071">
    <property type="entry name" value="AA_adenyl_dom"/>
</dbReference>
<dbReference type="InterPro" id="IPR036736">
    <property type="entry name" value="ACP-like_sf"/>
</dbReference>
<dbReference type="InterPro" id="IPR045851">
    <property type="entry name" value="AMP-bd_C_sf"/>
</dbReference>
<dbReference type="InterPro" id="IPR020845">
    <property type="entry name" value="AMP-binding_CS"/>
</dbReference>
<dbReference type="InterPro" id="IPR000873">
    <property type="entry name" value="AMP-dep_synth/lig_dom"/>
</dbReference>
<dbReference type="InterPro" id="IPR042099">
    <property type="entry name" value="ANL_N_sf"/>
</dbReference>
<dbReference type="InterPro" id="IPR023213">
    <property type="entry name" value="CAT-like_dom_sf"/>
</dbReference>
<dbReference type="InterPro" id="IPR001242">
    <property type="entry name" value="Condensatn"/>
</dbReference>
<dbReference type="InterPro" id="IPR018201">
    <property type="entry name" value="Ketoacyl_synth_AS"/>
</dbReference>
<dbReference type="InterPro" id="IPR014031">
    <property type="entry name" value="Ketoacyl_synth_C"/>
</dbReference>
<dbReference type="InterPro" id="IPR014030">
    <property type="entry name" value="Ketoacyl_synth_N"/>
</dbReference>
<dbReference type="InterPro" id="IPR020841">
    <property type="entry name" value="PKS_Beta-ketoAc_synthase_dom"/>
</dbReference>
<dbReference type="InterPro" id="IPR009081">
    <property type="entry name" value="PP-bd_ACP"/>
</dbReference>
<dbReference type="InterPro" id="IPR016039">
    <property type="entry name" value="Thiolase-like"/>
</dbReference>
<dbReference type="InterPro" id="IPR020615">
    <property type="entry name" value="Thiolase_acyl_enz_int_AS"/>
</dbReference>
<dbReference type="NCBIfam" id="TIGR01733">
    <property type="entry name" value="AA-adenyl-dom"/>
    <property type="match status" value="1"/>
</dbReference>
<dbReference type="PANTHER" id="PTHR45527:SF1">
    <property type="entry name" value="FATTY ACID SYNTHASE"/>
    <property type="match status" value="1"/>
</dbReference>
<dbReference type="PANTHER" id="PTHR45527">
    <property type="entry name" value="NONRIBOSOMAL PEPTIDE SYNTHETASE"/>
    <property type="match status" value="1"/>
</dbReference>
<dbReference type="Pfam" id="PF00501">
    <property type="entry name" value="AMP-binding"/>
    <property type="match status" value="1"/>
</dbReference>
<dbReference type="Pfam" id="PF00668">
    <property type="entry name" value="Condensation"/>
    <property type="match status" value="1"/>
</dbReference>
<dbReference type="Pfam" id="PF00109">
    <property type="entry name" value="ketoacyl-synt"/>
    <property type="match status" value="1"/>
</dbReference>
<dbReference type="Pfam" id="PF02801">
    <property type="entry name" value="Ketoacyl-synt_C"/>
    <property type="match status" value="2"/>
</dbReference>
<dbReference type="Pfam" id="PF00550">
    <property type="entry name" value="PP-binding"/>
    <property type="match status" value="1"/>
</dbReference>
<dbReference type="SMART" id="SM00825">
    <property type="entry name" value="PKS_KS"/>
    <property type="match status" value="1"/>
</dbReference>
<dbReference type="SUPFAM" id="SSF56801">
    <property type="entry name" value="Acetyl-CoA synthetase-like"/>
    <property type="match status" value="1"/>
</dbReference>
<dbReference type="SUPFAM" id="SSF47336">
    <property type="entry name" value="ACP-like"/>
    <property type="match status" value="1"/>
</dbReference>
<dbReference type="SUPFAM" id="SSF52777">
    <property type="entry name" value="CoA-dependent acyltransferases"/>
    <property type="match status" value="2"/>
</dbReference>
<dbReference type="SUPFAM" id="SSF53901">
    <property type="entry name" value="Thiolase-like"/>
    <property type="match status" value="1"/>
</dbReference>
<dbReference type="PROSITE" id="PS00455">
    <property type="entry name" value="AMP_BINDING"/>
    <property type="match status" value="1"/>
</dbReference>
<dbReference type="PROSITE" id="PS00606">
    <property type="entry name" value="KS3_1"/>
    <property type="match status" value="1"/>
</dbReference>
<dbReference type="PROSITE" id="PS52004">
    <property type="entry name" value="KS3_2"/>
    <property type="match status" value="1"/>
</dbReference>
<dbReference type="PROSITE" id="PS00098">
    <property type="entry name" value="THIOLASE_1"/>
    <property type="match status" value="1"/>
</dbReference>
<proteinExistence type="evidence at protein level"/>
<sequence>MSIPAMPFITGPVAEPQEQLRLSPPRGRLSAIIPLSKVQEVLWVDYLRQPWATHYNLTLKVDLTGSNLSLESIMNNIHKLGSRHDMLRTTFHIDSSAQHTSQSYMAVHDAASSFQNIAIVSDDARLQQALRRGLDLSTEFPVQWIVHQAYSVVDGRLVAAHTVYAMGHHIAVDGTSMSHLSRELVQLIQDGDTTTPPPPPPPSYGEFVQRQAAYLRSPEAQDAEAFWLAQIAHTTPHRWTHAAPLPASAPGHDYRKMDTWAFFPSDELAAWSQLYRTSWFRVAVSVIGLVTAGHARPAPHHDSTLQVAFGARAPSFAGCVSHMANTMPIRQPVSSLLRRSGSATFAELVQLVGKNISQAKKNEMYPFLSLVEAAARDGEDTAAASRVAVTLSPRLADDRCTLYPVNGVWDLFFCFLEHADGGVALGVISDPAVFGPAALAALRADVLRTVALSQQTPDFPLTSALSCLADRQVATLAGGPDVEDVDAVIAARVVSDWIRSRAATQPDEIALSNGEDGTSLTYGALDASSDRKAVHLQRLGAGRNDVVVLQLGAVFDMVAWILAVHKAGACFVVLDRQLPLARKQAILRVADAKLFVSDAFDDAYFADCATPPTTVSVWADTAVPADAHLAPVSGAAPTDLAYLVFTSGSTGLPKAIEVEHQNLSSYVSATRAVVPVGRGSRVLQFAPFAFDASVLEWAVTLSYGGTLCFVQHPALLVGDYLADMVDLNQINFFHTTPSVLATIPDGRRLPSLRALSVGGEASSAGLLDKWSRRLHLIHAYGPTETTVICATEHILPASDTLPSPSNIGRANPHVALLICPEDAETVLGPGVTGEICIAGPQVTRGYRGQPALTAAQFRTMEHNGRVTRMYRSGDRGFIGDDGKLHILGRMNNREIKLRGFRMDLAAIEKSILDNCPEVMTASVQVVDDKLVAFACPATLQGDAIRQRIALDLPSYSVPADITAVDSLPLNTNGKVDHKEVLQQFGASTGPAAAIKPVIVTKTAPKKKELQTSDSNLVDRLEASITTLWQKVLGCRDAPGPDVTFYNAGGHSILLSALHKELVTLYPAAKISLLDVFYNPTIRRQAQRLSELVGDDGFIPSSSVSDVSAQDVATPGNSTTATSVAADAPLFAIVGMAGRFPGADSVEAMWELLMAQRDGITTSDGAGAESADLAEGEVFVPRYGSINGLEDFRASDWNMSDEDAQVLDPQKRMFLMIAEEALQDASIPVRTVSGSNIGTFVGIAPNTYLSSALPSSVSSSAFERRYKAVLDPTASTLTAYKLNLLGPSMDVSAACASSLVAVHQALRALRAGDCAAALVGGVSLAYPQLGGYATSDGKIFSARGQCRPLDAAADGSVPADGVAAVVLKPLVAAQTDGDRVYAVIQGHAIGTDGAVDKIGFTVPSSSGQAKVISAAMADARLARHQGVRYVEMHGSGTSIGDALEYKGIERAVAAYEATGGESRCSSGAISPTGTEQQPSDTKQTPRTLFVGSNKGNFGNAEAASGLFSLIKASLAVSRGVVPPLRQLGDCNELMGVAEGSTVQPLRKQLRLEKGDRVGVTALGYGGVNAHCILASLEAVEERE</sequence>
<evidence type="ECO:0000255" key="1"/>
<evidence type="ECO:0000255" key="2">
    <source>
        <dbReference type="PROSITE-ProRule" id="PRU00258"/>
    </source>
</evidence>
<evidence type="ECO:0000255" key="3">
    <source>
        <dbReference type="PROSITE-ProRule" id="PRU01348"/>
    </source>
</evidence>
<evidence type="ECO:0000256" key="4">
    <source>
        <dbReference type="SAM" id="MobiDB-lite"/>
    </source>
</evidence>
<evidence type="ECO:0000269" key="5">
    <source>
    </source>
</evidence>
<evidence type="ECO:0000303" key="6">
    <source>
    </source>
</evidence>
<evidence type="ECO:0000305" key="7"/>
<evidence type="ECO:0000305" key="8">
    <source>
    </source>
</evidence>
<name>TAS1_CORMM</name>
<comment type="function">
    <text evidence="5">Hybrid PKS-NRPS synthetase that mediates the biosynthesis of the toxin tenuazonic acid (TeA), an inhibitor of protein biosynthesis on ribosomes by suppressing the release of new protein. TAS1 alone is sufficient for TeA synthesis via the condensation of isoleucine (Ile) with acetoacetyl-CoA by the N-terminal NRPS module and subsequent cyclization conducted by the C-terminal KS domain.</text>
</comment>
<comment type="catalytic activity">
    <reaction evidence="5">
        <text>acetoacetyl-CoA + L-isoleucine + ATP = tenuazonic acid + AMP + diphosphate + CoA + 2 H(+)</text>
        <dbReference type="Rhea" id="RHEA:52800"/>
        <dbReference type="ChEBI" id="CHEBI:15378"/>
        <dbReference type="ChEBI" id="CHEBI:30616"/>
        <dbReference type="ChEBI" id="CHEBI:33019"/>
        <dbReference type="ChEBI" id="CHEBI:57286"/>
        <dbReference type="ChEBI" id="CHEBI:57287"/>
        <dbReference type="ChEBI" id="CHEBI:58045"/>
        <dbReference type="ChEBI" id="CHEBI:136842"/>
        <dbReference type="ChEBI" id="CHEBI:456215"/>
        <dbReference type="EC" id="6.3.2.50"/>
    </reaction>
    <physiologicalReaction direction="left-to-right" evidence="5">
        <dbReference type="Rhea" id="RHEA:52801"/>
    </physiologicalReaction>
</comment>
<comment type="cofactor">
    <cofactor evidence="2">
        <name>pantetheine 4'-phosphate</name>
        <dbReference type="ChEBI" id="CHEBI:47942"/>
    </cofactor>
</comment>
<comment type="domain">
    <text evidence="5">TAS1 has the following domain architecture: C-A-T-KS. The N-terminal NRPS module contains the condensation (C), adenylation (A), and thiolation (T) domains and catalyzes the formation of the amide linkage between the isoleucine (Ile) with acetoacetyl-CoA. The PKS portion of TAS1 has only a ketosynthase (KS) domain and this domain is indispensable for TAS1 activity by conducting the final cyclization step for tenuazonic acid release.</text>
</comment>
<comment type="similarity">
    <text evidence="7">In the N-terminal section; belongs to the NRP synthetase family.</text>
</comment>
<keyword id="KW-0436">Ligase</keyword>
<keyword id="KW-0511">Multifunctional enzyme</keyword>
<keyword id="KW-0596">Phosphopantetheine</keyword>
<keyword id="KW-0597">Phosphoprotein</keyword>
<keyword id="KW-1185">Reference proteome</keyword>
<keyword id="KW-0808">Transferase</keyword>
<keyword id="KW-0843">Virulence</keyword>
<gene>
    <name evidence="6" type="primary">TAS1</name>
    <name type="ORF">CCM_02437</name>
</gene>
<accession>G3J9P0</accession>
<feature type="chain" id="PRO_0000460255" description="Hybrid PKS-NRPS synthetase TAS1">
    <location>
        <begin position="1"/>
        <end position="1582"/>
    </location>
</feature>
<feature type="domain" description="Carrier" evidence="2">
    <location>
        <begin position="1015"/>
        <end position="1092"/>
    </location>
</feature>
<feature type="domain" description="Ketosynthase family 3 (KS3)" evidence="3">
    <location>
        <begin position="1127"/>
        <end position="1574"/>
    </location>
</feature>
<feature type="region of interest" description="Condensation (C) domain" evidence="1 8">
    <location>
        <begin position="33"/>
        <end position="387"/>
    </location>
</feature>
<feature type="region of interest" description="Adenylation (A) domain" evidence="1 8">
    <location>
        <begin position="499"/>
        <end position="892"/>
    </location>
</feature>
<feature type="region of interest" description="Disordered" evidence="4">
    <location>
        <begin position="1460"/>
        <end position="1485"/>
    </location>
</feature>
<feature type="compositionally biased region" description="Polar residues" evidence="4">
    <location>
        <begin position="1462"/>
        <end position="1485"/>
    </location>
</feature>
<feature type="active site" description="For beta-ketoacyl synthase activity" evidence="3">
    <location>
        <position position="1294"/>
    </location>
</feature>
<feature type="active site" description="For beta-ketoacyl synthase activity" evidence="3">
    <location>
        <position position="1432"/>
    </location>
</feature>
<feature type="active site" description="For beta-ketoacyl synthase activity" evidence="3">
    <location>
        <position position="1498"/>
    </location>
</feature>
<reference key="1">
    <citation type="journal article" date="2011" name="Genome Biol.">
        <title>Genome sequence of the insect pathogenic fungus Cordyceps militaris, a valued traditional Chinese medicine.</title>
        <authorList>
            <person name="Zheng P."/>
            <person name="Xia Y."/>
            <person name="Xiao G."/>
            <person name="Xiong C."/>
            <person name="Hu X."/>
            <person name="Zhang S."/>
            <person name="Zheng H."/>
            <person name="Huang Y."/>
            <person name="Zhou Y."/>
            <person name="Wang S."/>
            <person name="Zhao G.-P."/>
            <person name="Liu X."/>
            <person name="St Leger R.J."/>
            <person name="Wang C."/>
        </authorList>
    </citation>
    <scope>NUCLEOTIDE SEQUENCE [LARGE SCALE GENOMIC DNA]</scope>
    <source>
        <strain>CM01</strain>
    </source>
</reference>
<reference key="2">
    <citation type="journal article" date="2023" name="ACS Chem. Biol.">
        <title>Fungal NRPS-PKS Hybrid Enzymes Biosynthesize New gamma-Lactam Compounds, Taslactams A-D, Analogous to Actinomycete Proteasome Inhibitors.</title>
        <authorList>
            <person name="Motoyama T."/>
            <person name="Nogawa T."/>
            <person name="Shimizu T."/>
            <person name="Kawatani M."/>
            <person name="Kashiwa T."/>
            <person name="Yun C.S."/>
            <person name="Hashizume D."/>
            <person name="Osada H."/>
        </authorList>
    </citation>
    <scope>FUNCTION</scope>
    <scope>DOMAIN</scope>
    <scope>CATALYTIC ACTIVITY</scope>
</reference>